<dbReference type="EC" id="3.2.1.52"/>
<dbReference type="EMBL" id="D87757">
    <property type="protein sequence ID" value="BAA13458.2"/>
    <property type="molecule type" value="mRNA"/>
</dbReference>
<dbReference type="EMBL" id="M94584">
    <property type="protein sequence ID" value="AAB62394.2"/>
    <property type="molecule type" value="mRNA"/>
</dbReference>
<dbReference type="EMBL" id="AK137503">
    <property type="protein sequence ID" value="BAE23385.1"/>
    <property type="molecule type" value="mRNA"/>
</dbReference>
<dbReference type="EMBL" id="AK154420">
    <property type="protein sequence ID" value="BAE32572.1"/>
    <property type="molecule type" value="mRNA"/>
</dbReference>
<dbReference type="EMBL" id="BC061154">
    <property type="protein sequence ID" value="AAH61154.1"/>
    <property type="molecule type" value="mRNA"/>
</dbReference>
<dbReference type="EMBL" id="U56900">
    <property type="protein sequence ID" value="AAB01230.1"/>
    <property type="molecule type" value="mRNA"/>
</dbReference>
<dbReference type="CCDS" id="CCDS17718.1"/>
<dbReference type="PIR" id="S27879">
    <property type="entry name" value="S27879"/>
</dbReference>
<dbReference type="RefSeq" id="NP_034022.2">
    <property type="nucleotide sequence ID" value="NM_009892.4"/>
</dbReference>
<dbReference type="PDB" id="1E9L">
    <property type="method" value="X-ray"/>
    <property type="resolution" value="2.50 A"/>
    <property type="chains" value="A=22-398"/>
</dbReference>
<dbReference type="PDB" id="1VF8">
    <property type="method" value="X-ray"/>
    <property type="resolution" value="1.31 A"/>
    <property type="chains" value="A=22-398"/>
</dbReference>
<dbReference type="PDB" id="8P8Q">
    <property type="method" value="X-ray"/>
    <property type="resolution" value="1.79 A"/>
    <property type="chains" value="A=21-398"/>
</dbReference>
<dbReference type="PDB" id="8P8R">
    <property type="method" value="X-ray"/>
    <property type="resolution" value="1.42 A"/>
    <property type="chains" value="A=1-398"/>
</dbReference>
<dbReference type="PDBsum" id="1E9L"/>
<dbReference type="PDBsum" id="1VF8"/>
<dbReference type="PDBsum" id="8P8Q"/>
<dbReference type="PDBsum" id="8P8R"/>
<dbReference type="SMR" id="O35744"/>
<dbReference type="FunCoup" id="O35744">
    <property type="interactions" value="46"/>
</dbReference>
<dbReference type="STRING" id="10090.ENSMUSP00000053923"/>
<dbReference type="ChEMBL" id="CHEMBL1795141"/>
<dbReference type="CAZy" id="GH18">
    <property type="family name" value="Glycoside Hydrolase Family 18"/>
</dbReference>
<dbReference type="UniLectin" id="O35744"/>
<dbReference type="CarbonylDB" id="O35744"/>
<dbReference type="GlyGen" id="O35744">
    <property type="glycosylation" value="1 site"/>
</dbReference>
<dbReference type="CPTAC" id="non-CPTAC-3641"/>
<dbReference type="jPOST" id="O35744"/>
<dbReference type="PaxDb" id="10090-ENSMUSP00000053923"/>
<dbReference type="PeptideAtlas" id="O35744"/>
<dbReference type="ProteomicsDB" id="281665"/>
<dbReference type="DNASU" id="12655"/>
<dbReference type="Ensembl" id="ENSMUST00000063062.9">
    <property type="protein sequence ID" value="ENSMUSP00000053923.9"/>
    <property type="gene ID" value="ENSMUSG00000040809.11"/>
</dbReference>
<dbReference type="GeneID" id="12655"/>
<dbReference type="KEGG" id="mmu:12655"/>
<dbReference type="UCSC" id="uc008qvw.2">
    <property type="organism name" value="mouse"/>
</dbReference>
<dbReference type="AGR" id="MGI:1330860"/>
<dbReference type="CTD" id="12655"/>
<dbReference type="MGI" id="MGI:1330860">
    <property type="gene designation" value="Chil3"/>
</dbReference>
<dbReference type="VEuPathDB" id="HostDB:ENSMUSG00000040809"/>
<dbReference type="eggNOG" id="KOG2806">
    <property type="taxonomic scope" value="Eukaryota"/>
</dbReference>
<dbReference type="GeneTree" id="ENSGT00940000154557"/>
<dbReference type="HOGENOM" id="CLU_002833_3_1_1"/>
<dbReference type="InParanoid" id="O35744"/>
<dbReference type="OMA" id="YGGMEWI"/>
<dbReference type="OrthoDB" id="76388at2759"/>
<dbReference type="PhylomeDB" id="O35744"/>
<dbReference type="TreeFam" id="TF315610"/>
<dbReference type="BioGRID-ORCS" id="12655">
    <property type="hits" value="4 hits in 76 CRISPR screens"/>
</dbReference>
<dbReference type="EvolutionaryTrace" id="O35744"/>
<dbReference type="PRO" id="PR:O35744"/>
<dbReference type="Proteomes" id="UP000000589">
    <property type="component" value="Chromosome 3"/>
</dbReference>
<dbReference type="RNAct" id="O35744">
    <property type="molecule type" value="protein"/>
</dbReference>
<dbReference type="Bgee" id="ENSMUSG00000040809">
    <property type="expression patterns" value="Expressed in granulocyte and 59 other cell types or tissues"/>
</dbReference>
<dbReference type="ExpressionAtlas" id="O35744">
    <property type="expression patterns" value="baseline and differential"/>
</dbReference>
<dbReference type="GO" id="GO:0005737">
    <property type="term" value="C:cytoplasm"/>
    <property type="evidence" value="ECO:0000314"/>
    <property type="project" value="MGI"/>
</dbReference>
<dbReference type="GO" id="GO:0031410">
    <property type="term" value="C:cytoplasmic vesicle"/>
    <property type="evidence" value="ECO:0000314"/>
    <property type="project" value="MGI"/>
</dbReference>
<dbReference type="GO" id="GO:0005576">
    <property type="term" value="C:extracellular region"/>
    <property type="evidence" value="ECO:0007669"/>
    <property type="project" value="UniProtKB-SubCell"/>
</dbReference>
<dbReference type="GO" id="GO:0005635">
    <property type="term" value="C:nuclear envelope"/>
    <property type="evidence" value="ECO:0007669"/>
    <property type="project" value="UniProtKB-SubCell"/>
</dbReference>
<dbReference type="GO" id="GO:0048237">
    <property type="term" value="C:rough endoplasmic reticulum lumen"/>
    <property type="evidence" value="ECO:0007669"/>
    <property type="project" value="UniProtKB-SubCell"/>
</dbReference>
<dbReference type="GO" id="GO:0004563">
    <property type="term" value="F:beta-N-acetylhexosaminidase activity"/>
    <property type="evidence" value="ECO:0000314"/>
    <property type="project" value="MGI"/>
</dbReference>
<dbReference type="GO" id="GO:0030246">
    <property type="term" value="F:carbohydrate binding"/>
    <property type="evidence" value="ECO:0000304"/>
    <property type="project" value="MGI"/>
</dbReference>
<dbReference type="GO" id="GO:0008061">
    <property type="term" value="F:chitin binding"/>
    <property type="evidence" value="ECO:0007669"/>
    <property type="project" value="UniProtKB-KW"/>
</dbReference>
<dbReference type="GO" id="GO:0006954">
    <property type="term" value="P:inflammatory response"/>
    <property type="evidence" value="ECO:0000304"/>
    <property type="project" value="MGI"/>
</dbReference>
<dbReference type="GO" id="GO:0000272">
    <property type="term" value="P:polysaccharide catabolic process"/>
    <property type="evidence" value="ECO:0007669"/>
    <property type="project" value="UniProtKB-KW"/>
</dbReference>
<dbReference type="GO" id="GO:0009624">
    <property type="term" value="P:response to nematode"/>
    <property type="evidence" value="ECO:0000314"/>
    <property type="project" value="MGI"/>
</dbReference>
<dbReference type="GO" id="GO:0010269">
    <property type="term" value="P:response to selenium ion"/>
    <property type="evidence" value="ECO:0000314"/>
    <property type="project" value="MGI"/>
</dbReference>
<dbReference type="CDD" id="cd02872">
    <property type="entry name" value="GH18_chitolectin_chitotriosidase"/>
    <property type="match status" value="1"/>
</dbReference>
<dbReference type="FunFam" id="3.20.20.80:FF:000007">
    <property type="entry name" value="Acidic mammalian chitinase"/>
    <property type="match status" value="1"/>
</dbReference>
<dbReference type="FunFam" id="3.10.50.10:FF:000001">
    <property type="entry name" value="Chitinase 3-like 1"/>
    <property type="match status" value="1"/>
</dbReference>
<dbReference type="Gene3D" id="3.10.50.10">
    <property type="match status" value="1"/>
</dbReference>
<dbReference type="Gene3D" id="3.20.20.80">
    <property type="entry name" value="Glycosidases"/>
    <property type="match status" value="1"/>
</dbReference>
<dbReference type="InterPro" id="IPR011583">
    <property type="entry name" value="Chitinase_II/V-like_cat"/>
</dbReference>
<dbReference type="InterPro" id="IPR029070">
    <property type="entry name" value="Chitinase_insertion_sf"/>
</dbReference>
<dbReference type="InterPro" id="IPR001223">
    <property type="entry name" value="Glyco_hydro18_cat"/>
</dbReference>
<dbReference type="InterPro" id="IPR017853">
    <property type="entry name" value="Glycoside_hydrolase_SF"/>
</dbReference>
<dbReference type="InterPro" id="IPR050314">
    <property type="entry name" value="Glycosyl_Hydrlase_18"/>
</dbReference>
<dbReference type="PANTHER" id="PTHR11177">
    <property type="entry name" value="CHITINASE"/>
    <property type="match status" value="1"/>
</dbReference>
<dbReference type="PANTHER" id="PTHR11177:SF140">
    <property type="entry name" value="CHITINASE-LIKE PROTEIN 3-RELATED"/>
    <property type="match status" value="1"/>
</dbReference>
<dbReference type="Pfam" id="PF00704">
    <property type="entry name" value="Glyco_hydro_18"/>
    <property type="match status" value="1"/>
</dbReference>
<dbReference type="SMART" id="SM00636">
    <property type="entry name" value="Glyco_18"/>
    <property type="match status" value="1"/>
</dbReference>
<dbReference type="SUPFAM" id="SSF51445">
    <property type="entry name" value="(Trans)glycosidases"/>
    <property type="match status" value="1"/>
</dbReference>
<dbReference type="SUPFAM" id="SSF54556">
    <property type="entry name" value="Chitinase insertion domain"/>
    <property type="match status" value="1"/>
</dbReference>
<dbReference type="PROSITE" id="PS51910">
    <property type="entry name" value="GH18_2"/>
    <property type="match status" value="1"/>
</dbReference>
<proteinExistence type="evidence at protein level"/>
<comment type="function">
    <text evidence="2 3 4">Lectin that binds saccharides with a free amino group, such as glucosamine or galactosamine. Binding to oligomeric saccharides is much stronger than binding to mono- or disaccharides. Also binds chitin and heparin. Has weak hexosaminidase activity but no chitinase activity. Has chemotactic activity for T-lymphocytes, bone marrow cells and eosinophils. May play a role in inflammation and allergy.</text>
</comment>
<comment type="catalytic activity">
    <reaction evidence="4">
        <text>Hydrolysis of terminal non-reducing N-acetyl-D-hexosamine residues in N-acetyl-beta-D-hexosaminides.</text>
        <dbReference type="EC" id="3.2.1.52"/>
    </reaction>
</comment>
<comment type="biophysicochemical properties">
    <kinetics>
        <KM evidence="4">120.8 uM for 4-methylumbelliferone-N-acetylglucosamine (at pH 4-4.5)</KM>
        <Vmax evidence="4">0.023 umol/min/mg enzyme</Vmax>
        <text>4-methylumbelliferone-N-acetylglucosamine (MU-(GlcNAc)1) is a GlcNAc2 analog.</text>
    </kinetics>
    <phDependence>
        <text evidence="4">Optimum pH is 4.5-5.0.</text>
    </phDependence>
</comment>
<comment type="subcellular location">
    <subcellularLocation>
        <location>Secreted</location>
    </subcellularLocation>
    <subcellularLocation>
        <location>Rough endoplasmic reticulum lumen</location>
    </subcellularLocation>
    <subcellularLocation>
        <location>Nucleus envelope</location>
    </subcellularLocation>
    <subcellularLocation>
        <location>Cytoplasm</location>
    </subcellularLocation>
    <subcellularLocation>
        <location>Cytoplasmic granule</location>
    </subcellularLocation>
    <text>Predominantly localizes to the lumen of rough endoplasmic reticulum (rER) and nuclear envelope in alveolar macrophages. Localizes to the dilated lumen of rER in immature neutrophils in spleen and in cytoplasmic granules in peritoneal neutrophils. Detected in needle-shaped crystals present in the cytoplasm of bone marrow macrophages.</text>
</comment>
<comment type="tissue specificity">
    <text evidence="2 3 4 5 7 8">Expressed in peritoneal cavity macrophages and in peritoneal and bone marrow-derived neutrophils. Abundantly expressed in bone marrow, with moderate levels detected in gastric antrum, spleen and in alveolar macrophages in lung. Not detected in brain, heart, liver, kidney, stomach, intestine, skeletal muscle, ovary, testis, thymus and lymph nodes (at protein level). Detected at low levels in bone marrow, spleen, thymus and lung. Barely detectable in intestine, kidney and coecum.</text>
</comment>
<comment type="developmental stage">
    <text evidence="5">In yolk sac, first detected at low levels at 8.5 dpc, with significant expression detected at 10.5 dpc in myeloid precursor cells. In liver, expressed from 16.5 dpc to P7.5 with highest levels detected from 18.5 dpc to P0.5. In spleen, first detected at 16.5 dpc, with peak levels detected at 18.5 dpc and P0.5 and expression persisting through the spleen maturation to the adult stage. In bone marrow, high expression levels detected from 16.5 dpc until adulthood. In lung, first detected around the time of birth, with levels increasing significantly from P14.5 towards adulthood.</text>
</comment>
<comment type="induction">
    <text evidence="2 3 5 6">Up-regulated in response to IL3 and IL4, during the inflammatory response and upon parasitic infection.</text>
</comment>
<comment type="similarity">
    <text evidence="9">Belongs to the glycosyl hydrolase 18 family. Chitinase class II subfamily.</text>
</comment>
<organism>
    <name type="scientific">Mus musculus</name>
    <name type="common">Mouse</name>
    <dbReference type="NCBI Taxonomy" id="10090"/>
    <lineage>
        <taxon>Eukaryota</taxon>
        <taxon>Metazoa</taxon>
        <taxon>Chordata</taxon>
        <taxon>Craniata</taxon>
        <taxon>Vertebrata</taxon>
        <taxon>Euteleostomi</taxon>
        <taxon>Mammalia</taxon>
        <taxon>Eutheria</taxon>
        <taxon>Euarchontoglires</taxon>
        <taxon>Glires</taxon>
        <taxon>Rodentia</taxon>
        <taxon>Myomorpha</taxon>
        <taxon>Muroidea</taxon>
        <taxon>Muridae</taxon>
        <taxon>Murinae</taxon>
        <taxon>Mus</taxon>
        <taxon>Mus</taxon>
    </lineage>
</organism>
<accession>O35744</accession>
<accession>P70201</accession>
<accession>Q3U462</accession>
<accession>Q3UV87</accession>
<accession>Q61201</accession>
<name>CHIL3_MOUSE</name>
<feature type="signal peptide" evidence="2 3">
    <location>
        <begin position="1"/>
        <end position="21"/>
    </location>
</feature>
<feature type="chain" id="PRO_0000011970" description="Chitinase-like protein 3">
    <location>
        <begin position="22"/>
        <end position="398"/>
    </location>
</feature>
<feature type="domain" description="GH18" evidence="1">
    <location>
        <begin position="22"/>
        <end position="390"/>
    </location>
</feature>
<feature type="binding site" evidence="1">
    <location>
        <begin position="70"/>
        <end position="71"/>
    </location>
    <ligand>
        <name>chitin</name>
        <dbReference type="ChEBI" id="CHEBI:17029"/>
    </ligand>
</feature>
<feature type="binding site" evidence="1">
    <location>
        <begin position="97"/>
        <end position="100"/>
    </location>
    <ligand>
        <name>chitin</name>
        <dbReference type="ChEBI" id="CHEBI:17029"/>
    </ligand>
</feature>
<feature type="binding site" evidence="1">
    <location>
        <position position="141"/>
    </location>
    <ligand>
        <name>chitin</name>
        <dbReference type="ChEBI" id="CHEBI:17029"/>
    </ligand>
</feature>
<feature type="binding site" evidence="1">
    <location>
        <begin position="210"/>
        <end position="213"/>
    </location>
    <ligand>
        <name>chitin</name>
        <dbReference type="ChEBI" id="CHEBI:17029"/>
    </ligand>
</feature>
<feature type="binding site" evidence="1">
    <location>
        <position position="360"/>
    </location>
    <ligand>
        <name>chitin</name>
        <dbReference type="ChEBI" id="CHEBI:17029"/>
    </ligand>
</feature>
<feature type="disulfide bond" evidence="1">
    <location>
        <begin position="26"/>
        <end position="51"/>
    </location>
</feature>
<feature type="disulfide bond">
    <location>
        <begin position="49"/>
        <end position="394"/>
    </location>
</feature>
<feature type="disulfide bond">
    <location>
        <begin position="307"/>
        <end position="372"/>
    </location>
</feature>
<feature type="sequence conflict" description="In Ref. 1; no nucleotide entry and 2; BAA13458." evidence="9" ref="1 2">
    <original>P</original>
    <variation>S</variation>
    <location>
        <position position="105"/>
    </location>
</feature>
<feature type="sequence conflict" description="In Ref. 3; BAE23385." evidence="9" ref="3">
    <original>S</original>
    <variation>P</variation>
    <location>
        <position position="257"/>
    </location>
</feature>
<feature type="sequence conflict" description="In Ref. 1; no nucleotide entry." evidence="9" ref="1">
    <original>P</original>
    <variation>R</variation>
    <location>
        <position position="361"/>
    </location>
</feature>
<feature type="strand" evidence="11">
    <location>
        <begin position="23"/>
        <end position="29"/>
    </location>
</feature>
<feature type="helix" evidence="11">
    <location>
        <begin position="30"/>
        <end position="34"/>
    </location>
</feature>
<feature type="helix" evidence="11">
    <location>
        <begin position="37"/>
        <end position="39"/>
    </location>
</feature>
<feature type="helix" evidence="11">
    <location>
        <begin position="43"/>
        <end position="45"/>
    </location>
</feature>
<feature type="turn" evidence="11">
    <location>
        <begin position="48"/>
        <end position="50"/>
    </location>
</feature>
<feature type="strand" evidence="11">
    <location>
        <begin position="52"/>
        <end position="62"/>
    </location>
</feature>
<feature type="strand" evidence="11">
    <location>
        <begin position="65"/>
        <end position="67"/>
    </location>
</feature>
<feature type="helix" evidence="11">
    <location>
        <begin position="73"/>
        <end position="82"/>
    </location>
</feature>
<feature type="helix" evidence="11">
    <location>
        <begin position="83"/>
        <end position="85"/>
    </location>
</feature>
<feature type="strand" evidence="11">
    <location>
        <begin position="91"/>
        <end position="97"/>
    </location>
</feature>
<feature type="turn" evidence="11">
    <location>
        <begin position="99"/>
        <end position="101"/>
    </location>
</feature>
<feature type="helix" evidence="11">
    <location>
        <begin position="104"/>
        <end position="110"/>
    </location>
</feature>
<feature type="helix" evidence="11">
    <location>
        <begin position="113"/>
        <end position="129"/>
    </location>
</feature>
<feature type="strand" evidence="11">
    <location>
        <begin position="134"/>
        <end position="138"/>
    </location>
</feature>
<feature type="strand" evidence="10">
    <location>
        <begin position="142"/>
        <end position="144"/>
    </location>
</feature>
<feature type="helix" evidence="11">
    <location>
        <begin position="150"/>
        <end position="173"/>
    </location>
</feature>
<feature type="strand" evidence="11">
    <location>
        <begin position="179"/>
        <end position="184"/>
    </location>
</feature>
<feature type="helix" evidence="11">
    <location>
        <begin position="188"/>
        <end position="194"/>
    </location>
</feature>
<feature type="helix" evidence="11">
    <location>
        <begin position="197"/>
        <end position="203"/>
    </location>
</feature>
<feature type="strand" evidence="11">
    <location>
        <begin position="205"/>
        <end position="209"/>
    </location>
</feature>
<feature type="helix" evidence="11">
    <location>
        <begin position="217"/>
        <end position="219"/>
    </location>
</feature>
<feature type="helix" evidence="11">
    <location>
        <begin position="236"/>
        <end position="240"/>
    </location>
</feature>
<feature type="helix" evidence="11">
    <location>
        <begin position="243"/>
        <end position="252"/>
    </location>
</feature>
<feature type="helix" evidence="11">
    <location>
        <begin position="257"/>
        <end position="259"/>
    </location>
</feature>
<feature type="strand" evidence="11">
    <location>
        <begin position="260"/>
        <end position="274"/>
    </location>
</feature>
<feature type="strand" evidence="11">
    <location>
        <begin position="284"/>
        <end position="288"/>
    </location>
</feature>
<feature type="turn" evidence="11">
    <location>
        <begin position="293"/>
        <end position="295"/>
    </location>
</feature>
<feature type="strand" evidence="11">
    <location>
        <begin position="300"/>
        <end position="302"/>
    </location>
</feature>
<feature type="helix" evidence="11">
    <location>
        <begin position="303"/>
        <end position="311"/>
    </location>
</feature>
<feature type="strand" evidence="11">
    <location>
        <begin position="315"/>
        <end position="319"/>
    </location>
</feature>
<feature type="turn" evidence="11">
    <location>
        <begin position="320"/>
        <end position="323"/>
    </location>
</feature>
<feature type="strand" evidence="11">
    <location>
        <begin position="324"/>
        <end position="329"/>
    </location>
</feature>
<feature type="strand" evidence="11">
    <location>
        <begin position="332"/>
        <end position="335"/>
    </location>
</feature>
<feature type="helix" evidence="11">
    <location>
        <begin position="339"/>
        <end position="351"/>
    </location>
</feature>
<feature type="strand" evidence="11">
    <location>
        <begin position="356"/>
        <end position="360"/>
    </location>
</feature>
<feature type="helix" evidence="11">
    <location>
        <begin position="362"/>
        <end position="364"/>
    </location>
</feature>
<feature type="turn" evidence="11">
    <location>
        <begin position="370"/>
        <end position="372"/>
    </location>
</feature>
<feature type="helix" evidence="11">
    <location>
        <begin position="378"/>
        <end position="386"/>
    </location>
</feature>
<protein>
    <recommendedName>
        <fullName>Chitinase-like protein 3</fullName>
        <ecNumber>3.2.1.52</ecNumber>
    </recommendedName>
    <alternativeName>
        <fullName>Beta-N-acetylhexosaminidase Ym1</fullName>
    </alternativeName>
    <alternativeName>
        <fullName>Chitinase-3-like protein 3</fullName>
    </alternativeName>
    <alternativeName>
        <fullName>ECF-L</fullName>
    </alternativeName>
    <alternativeName>
        <fullName>Eosinophil chemotactic cytokine</fullName>
    </alternativeName>
    <alternativeName>
        <fullName>Secreted protein Ym1</fullName>
    </alternativeName>
</protein>
<gene>
    <name type="primary">Chil3</name>
    <name type="synonym">Chi3l3</name>
    <name type="synonym">Ym1</name>
</gene>
<reference key="1">
    <citation type="journal article" date="1998" name="Genomics">
        <title>Genetic characterization of the murine Ym1 gene and identification of a cluster of highly homologous genes.</title>
        <authorList>
            <person name="Jin H.M."/>
            <person name="Copeland N.G."/>
            <person name="Gilbert D.J."/>
            <person name="Jenkins N.A."/>
            <person name="Kirkpatrick R.B."/>
            <person name="Rosenberg M."/>
        </authorList>
    </citation>
    <scope>NUCLEOTIDE SEQUENCE [GENOMIC DNA]</scope>
    <scope>TISSUE SPECIFICITY</scope>
    <source>
        <strain>129/SvJ</strain>
    </source>
</reference>
<reference key="2">
    <citation type="journal article" date="2000" name="J. Biol. Chem.">
        <title>Identification of a novel eosinophil chemotactic cytokine (ECF-L) as a chitinase family protein.</title>
        <authorList>
            <person name="Owhashi M."/>
            <person name="Arita H."/>
            <person name="Hayai N."/>
        </authorList>
    </citation>
    <scope>NUCLEOTIDE SEQUENCE [MRNA]</scope>
    <scope>PROTEIN SEQUENCE OF 22-39</scope>
    <scope>FUNCTION</scope>
    <scope>TISSUE SPECIFICITY</scope>
    <scope>INDUCTION</scope>
    <source>
        <tissue>Bone marrow</tissue>
    </source>
</reference>
<reference key="3">
    <citation type="journal article" date="2001" name="J. Biol. Chem.">
        <title>A macrophage protein, Ym1, transiently expressed during inflammation is a novel mammalian lectin.</title>
        <authorList>
            <person name="Chang N.-C.A."/>
            <person name="Hung S.-I."/>
            <person name="Hwa K.-Y."/>
            <person name="Kato I."/>
            <person name="Chen J.-E."/>
            <person name="Liu C.-H."/>
            <person name="Chang A.C."/>
        </authorList>
    </citation>
    <scope>NUCLEOTIDE SEQUENCE [MRNA]</scope>
    <scope>PROTEIN SEQUENCE OF 22-48; 109-134; 162-192 AND 210-225</scope>
    <scope>FUNCTION</scope>
    <scope>SUBCELLULAR LOCATION</scope>
    <scope>TISSUE SPECIFICITY</scope>
    <scope>INDUCTION</scope>
    <source>
        <tissue>Macrophage</tissue>
    </source>
</reference>
<reference key="4">
    <citation type="journal article" date="2005" name="Science">
        <title>The transcriptional landscape of the mammalian genome.</title>
        <authorList>
            <person name="Carninci P."/>
            <person name="Kasukawa T."/>
            <person name="Katayama S."/>
            <person name="Gough J."/>
            <person name="Frith M.C."/>
            <person name="Maeda N."/>
            <person name="Oyama R."/>
            <person name="Ravasi T."/>
            <person name="Lenhard B."/>
            <person name="Wells C."/>
            <person name="Kodzius R."/>
            <person name="Shimokawa K."/>
            <person name="Bajic V.B."/>
            <person name="Brenner S.E."/>
            <person name="Batalov S."/>
            <person name="Forrest A.R."/>
            <person name="Zavolan M."/>
            <person name="Davis M.J."/>
            <person name="Wilming L.G."/>
            <person name="Aidinis V."/>
            <person name="Allen J.E."/>
            <person name="Ambesi-Impiombato A."/>
            <person name="Apweiler R."/>
            <person name="Aturaliya R.N."/>
            <person name="Bailey T.L."/>
            <person name="Bansal M."/>
            <person name="Baxter L."/>
            <person name="Beisel K.W."/>
            <person name="Bersano T."/>
            <person name="Bono H."/>
            <person name="Chalk A.M."/>
            <person name="Chiu K.P."/>
            <person name="Choudhary V."/>
            <person name="Christoffels A."/>
            <person name="Clutterbuck D.R."/>
            <person name="Crowe M.L."/>
            <person name="Dalla E."/>
            <person name="Dalrymple B.P."/>
            <person name="de Bono B."/>
            <person name="Della Gatta G."/>
            <person name="di Bernardo D."/>
            <person name="Down T."/>
            <person name="Engstrom P."/>
            <person name="Fagiolini M."/>
            <person name="Faulkner G."/>
            <person name="Fletcher C.F."/>
            <person name="Fukushima T."/>
            <person name="Furuno M."/>
            <person name="Futaki S."/>
            <person name="Gariboldi M."/>
            <person name="Georgii-Hemming P."/>
            <person name="Gingeras T.R."/>
            <person name="Gojobori T."/>
            <person name="Green R.E."/>
            <person name="Gustincich S."/>
            <person name="Harbers M."/>
            <person name="Hayashi Y."/>
            <person name="Hensch T.K."/>
            <person name="Hirokawa N."/>
            <person name="Hill D."/>
            <person name="Huminiecki L."/>
            <person name="Iacono M."/>
            <person name="Ikeo K."/>
            <person name="Iwama A."/>
            <person name="Ishikawa T."/>
            <person name="Jakt M."/>
            <person name="Kanapin A."/>
            <person name="Katoh M."/>
            <person name="Kawasawa Y."/>
            <person name="Kelso J."/>
            <person name="Kitamura H."/>
            <person name="Kitano H."/>
            <person name="Kollias G."/>
            <person name="Krishnan S.P."/>
            <person name="Kruger A."/>
            <person name="Kummerfeld S.K."/>
            <person name="Kurochkin I.V."/>
            <person name="Lareau L.F."/>
            <person name="Lazarevic D."/>
            <person name="Lipovich L."/>
            <person name="Liu J."/>
            <person name="Liuni S."/>
            <person name="McWilliam S."/>
            <person name="Madan Babu M."/>
            <person name="Madera M."/>
            <person name="Marchionni L."/>
            <person name="Matsuda H."/>
            <person name="Matsuzawa S."/>
            <person name="Miki H."/>
            <person name="Mignone F."/>
            <person name="Miyake S."/>
            <person name="Morris K."/>
            <person name="Mottagui-Tabar S."/>
            <person name="Mulder N."/>
            <person name="Nakano N."/>
            <person name="Nakauchi H."/>
            <person name="Ng P."/>
            <person name="Nilsson R."/>
            <person name="Nishiguchi S."/>
            <person name="Nishikawa S."/>
            <person name="Nori F."/>
            <person name="Ohara O."/>
            <person name="Okazaki Y."/>
            <person name="Orlando V."/>
            <person name="Pang K.C."/>
            <person name="Pavan W.J."/>
            <person name="Pavesi G."/>
            <person name="Pesole G."/>
            <person name="Petrovsky N."/>
            <person name="Piazza S."/>
            <person name="Reed J."/>
            <person name="Reid J.F."/>
            <person name="Ring B.Z."/>
            <person name="Ringwald M."/>
            <person name="Rost B."/>
            <person name="Ruan Y."/>
            <person name="Salzberg S.L."/>
            <person name="Sandelin A."/>
            <person name="Schneider C."/>
            <person name="Schoenbach C."/>
            <person name="Sekiguchi K."/>
            <person name="Semple C.A."/>
            <person name="Seno S."/>
            <person name="Sessa L."/>
            <person name="Sheng Y."/>
            <person name="Shibata Y."/>
            <person name="Shimada H."/>
            <person name="Shimada K."/>
            <person name="Silva D."/>
            <person name="Sinclair B."/>
            <person name="Sperling S."/>
            <person name="Stupka E."/>
            <person name="Sugiura K."/>
            <person name="Sultana R."/>
            <person name="Takenaka Y."/>
            <person name="Taki K."/>
            <person name="Tammoja K."/>
            <person name="Tan S.L."/>
            <person name="Tang S."/>
            <person name="Taylor M.S."/>
            <person name="Tegner J."/>
            <person name="Teichmann S.A."/>
            <person name="Ueda H.R."/>
            <person name="van Nimwegen E."/>
            <person name="Verardo R."/>
            <person name="Wei C.L."/>
            <person name="Yagi K."/>
            <person name="Yamanishi H."/>
            <person name="Zabarovsky E."/>
            <person name="Zhu S."/>
            <person name="Zimmer A."/>
            <person name="Hide W."/>
            <person name="Bult C."/>
            <person name="Grimmond S.M."/>
            <person name="Teasdale R.D."/>
            <person name="Liu E.T."/>
            <person name="Brusic V."/>
            <person name="Quackenbush J."/>
            <person name="Wahlestedt C."/>
            <person name="Mattick J.S."/>
            <person name="Hume D.A."/>
            <person name="Kai C."/>
            <person name="Sasaki D."/>
            <person name="Tomaru Y."/>
            <person name="Fukuda S."/>
            <person name="Kanamori-Katayama M."/>
            <person name="Suzuki M."/>
            <person name="Aoki J."/>
            <person name="Arakawa T."/>
            <person name="Iida J."/>
            <person name="Imamura K."/>
            <person name="Itoh M."/>
            <person name="Kato T."/>
            <person name="Kawaji H."/>
            <person name="Kawagashira N."/>
            <person name="Kawashima T."/>
            <person name="Kojima M."/>
            <person name="Kondo S."/>
            <person name="Konno H."/>
            <person name="Nakano K."/>
            <person name="Ninomiya N."/>
            <person name="Nishio T."/>
            <person name="Okada M."/>
            <person name="Plessy C."/>
            <person name="Shibata K."/>
            <person name="Shiraki T."/>
            <person name="Suzuki S."/>
            <person name="Tagami M."/>
            <person name="Waki K."/>
            <person name="Watahiki A."/>
            <person name="Okamura-Oho Y."/>
            <person name="Suzuki H."/>
            <person name="Kawai J."/>
            <person name="Hayashizaki Y."/>
        </authorList>
    </citation>
    <scope>NUCLEOTIDE SEQUENCE [LARGE SCALE MRNA]</scope>
    <source>
        <strain>NOD</strain>
        <tissue>Bone</tissue>
        <tissue>Dendritic cell</tissue>
    </source>
</reference>
<reference key="5">
    <citation type="journal article" date="2004" name="Genome Res.">
        <title>The status, quality, and expansion of the NIH full-length cDNA project: the Mammalian Gene Collection (MGC).</title>
        <authorList>
            <consortium name="The MGC Project Team"/>
        </authorList>
    </citation>
    <scope>NUCLEOTIDE SEQUENCE [LARGE SCALE MRNA]</scope>
    <source>
        <tissue>Heart</tissue>
        <tissue>Lung</tissue>
    </source>
</reference>
<reference key="6">
    <citation type="submission" date="1996-04" db="EMBL/GenBank/DDBJ databases">
        <title>Mouse chitinase-related protein mRNA (MCRP), partial cds.</title>
        <authorList>
            <person name="Shmelkov S.V."/>
            <person name="Zinovjeva M.V."/>
            <person name="Belyavsky A.V."/>
        </authorList>
    </citation>
    <scope>NUCLEOTIDE SEQUENCE [MRNA] OF 139-398</scope>
    <source>
        <strain>CBA/J</strain>
        <tissue>Bone marrow</tissue>
    </source>
</reference>
<reference key="7">
    <citation type="journal article" date="2002" name="J. Biol. Chem.">
        <title>Ym1 is a neutrophil granule protein that crystallizes in p47phox-deficient mice.</title>
        <authorList>
            <person name="Harbord M."/>
            <person name="Novelli M."/>
            <person name="Canas B."/>
            <person name="Power D."/>
            <person name="Davis C."/>
            <person name="Godovac-Zimmermann J."/>
            <person name="Roes J."/>
            <person name="Segal A.W."/>
        </authorList>
    </citation>
    <scope>FUNCTION</scope>
    <scope>CATALYTIC ACTIVITY</scope>
    <scope>BIOPHYSICOCHEMICAL PROPERTIES</scope>
    <scope>SUBCELLULAR LOCATION</scope>
    <scope>TISSUE SPECIFICITY</scope>
</reference>
<reference key="8">
    <citation type="journal article" date="2002" name="J. Biol. Chem.">
        <title>TH2 cytokines and allergic challenge induce Ym1 expression in macrophages by a STAT6-dependent mechanism.</title>
        <authorList>
            <person name="Welch J.S."/>
            <person name="Escoubet-Lozach L."/>
            <person name="Sykes D.B."/>
            <person name="Liddiard K."/>
            <person name="Greaves D.R."/>
            <person name="Glass C.K."/>
        </authorList>
    </citation>
    <scope>INDUCTION BY IL3 AND IL4</scope>
</reference>
<reference key="9">
    <citation type="journal article" date="2002" name="J. Leukoc. Biol.">
        <title>Transient expression of Ym1, a heparin-binding lectin, during developmental hematopoiesis and inflammation.</title>
        <authorList>
            <person name="Hung S.I."/>
            <person name="Chang A.C."/>
            <person name="Kato I."/>
            <person name="Chang N.C."/>
        </authorList>
    </citation>
    <scope>TISSUE SPECIFICITY</scope>
    <scope>DEVELOPMENTAL STAGE</scope>
    <scope>INDUCTION</scope>
</reference>
<reference key="10">
    <citation type="journal article" date="2004" name="Histochem. Cell Biol.">
        <title>Cellular expression of murine Ym1 and Ym2, chitinase family proteins, as revealed by in situ hybridization and immunohistochemistry.</title>
        <authorList>
            <person name="Nio J."/>
            <person name="Fujimoto W."/>
            <person name="Konno A."/>
            <person name="Kon Y."/>
            <person name="Owhashi M."/>
            <person name="Iwanaga T."/>
        </authorList>
    </citation>
    <scope>SUBCELLULAR LOCATION</scope>
    <scope>TISSUE SPECIFICITY</scope>
</reference>
<reference key="11">
    <citation type="journal article" date="2010" name="Cell">
        <title>A tissue-specific atlas of mouse protein phosphorylation and expression.</title>
        <authorList>
            <person name="Huttlin E.L."/>
            <person name="Jedrychowski M.P."/>
            <person name="Elias J.E."/>
            <person name="Goswami T."/>
            <person name="Rad R."/>
            <person name="Beausoleil S.A."/>
            <person name="Villen J."/>
            <person name="Haas W."/>
            <person name="Sowa M.E."/>
            <person name="Gygi S.P."/>
        </authorList>
    </citation>
    <scope>IDENTIFICATION BY MASS SPECTROMETRY [LARGE SCALE ANALYSIS]</scope>
    <source>
        <tissue>Kidney</tissue>
        <tissue>Liver</tissue>
        <tissue>Lung</tissue>
        <tissue>Spleen</tissue>
    </source>
</reference>
<reference key="12">
    <citation type="journal article" date="2001" name="J. Biol. Chem.">
        <title>The crystal structure of a novel mammalian lectin, Ym1, suggests a saccharide binding site.</title>
        <authorList>
            <person name="Sun Y.-J."/>
            <person name="Chang N.-C.A."/>
            <person name="Hung S.-I."/>
            <person name="Chang A.C."/>
            <person name="Chou C.-C."/>
            <person name="Hsiao C.-D."/>
        </authorList>
    </citation>
    <scope>X-RAY CRYSTALLOGRAPHY (2.5 ANGSTROMS) OF 22-398</scope>
    <scope>DISULFIDE BONDS</scope>
</reference>
<reference key="13">
    <citation type="journal article" date="2004" name="J. Struct. Biol.">
        <title>The crystal structure of Ym1 at 1.31 A resolution.</title>
        <authorList>
            <person name="Tsai M.L."/>
            <person name="Liaw S.H."/>
            <person name="Chang N.C."/>
        </authorList>
    </citation>
    <scope>X-RAY CRYSTALLOGRAPHY (1.31 ANGSTROMS) OF 22-398</scope>
    <scope>DISULFIDE BONDS</scope>
</reference>
<evidence type="ECO:0000255" key="1">
    <source>
        <dbReference type="PROSITE-ProRule" id="PRU01258"/>
    </source>
</evidence>
<evidence type="ECO:0000269" key="2">
    <source>
    </source>
</evidence>
<evidence type="ECO:0000269" key="3">
    <source>
    </source>
</evidence>
<evidence type="ECO:0000269" key="4">
    <source>
    </source>
</evidence>
<evidence type="ECO:0000269" key="5">
    <source>
    </source>
</evidence>
<evidence type="ECO:0000269" key="6">
    <source>
    </source>
</evidence>
<evidence type="ECO:0000269" key="7">
    <source>
    </source>
</evidence>
<evidence type="ECO:0000269" key="8">
    <source>
    </source>
</evidence>
<evidence type="ECO:0000305" key="9"/>
<evidence type="ECO:0007829" key="10">
    <source>
        <dbReference type="PDB" id="1E9L"/>
    </source>
</evidence>
<evidence type="ECO:0007829" key="11">
    <source>
        <dbReference type="PDB" id="1VF8"/>
    </source>
</evidence>
<sequence>MAKLILVTGLAILLNVQLGSSYQLMCYYTSWAKDRPIEGSFKPGNIDPCLCTHLIYAFAGMQNNEITYTHEQDLRDYEALNGLKDKNTELKTLLAIGGWKFGPAPFSAMVSTPQNRQIFIQSVIRFLRQYNFDGLNLDWQYPGSRGSPPKDKHLFSVLVKEMRKAFEEESVEKDIPRLLLTSTGAGIIDVIKSGYKIPELSQSLDYIQVMTYDLHDPKDGYTGENSPLYKSPYDIGKSADLNVDSIISYWKDHGAASEKLIVGFPAYGHTFILSDPSKTGIGAPTISTGPPGKYTDESGLLAYYEVCTFLNEGATEVWDAPQEVPYAYQGNEWVGYDNVRSFKLKAQWLKDNNLGGAVVWPLDMDDFSGSFCHQRHFPLTSTLKGDLNIHSASCKGPY</sequence>
<keyword id="KW-0002">3D-structure</keyword>
<keyword id="KW-0119">Carbohydrate metabolism</keyword>
<keyword id="KW-0147">Chitin-binding</keyword>
<keyword id="KW-0963">Cytoplasm</keyword>
<keyword id="KW-0903">Direct protein sequencing</keyword>
<keyword id="KW-1015">Disulfide bond</keyword>
<keyword id="KW-0256">Endoplasmic reticulum</keyword>
<keyword id="KW-0326">Glycosidase</keyword>
<keyword id="KW-0378">Hydrolase</keyword>
<keyword id="KW-0395">Inflammatory response</keyword>
<keyword id="KW-0430">Lectin</keyword>
<keyword id="KW-0539">Nucleus</keyword>
<keyword id="KW-0624">Polysaccharide degradation</keyword>
<keyword id="KW-1185">Reference proteome</keyword>
<keyword id="KW-0964">Secreted</keyword>
<keyword id="KW-0732">Signal</keyword>